<accession>Q1AWM0</accession>
<evidence type="ECO:0000255" key="1">
    <source>
        <dbReference type="HAMAP-Rule" id="MF_01006"/>
    </source>
</evidence>
<gene>
    <name evidence="1" type="primary">uppP</name>
    <name type="ordered locus">Rxyl_1243</name>
</gene>
<name>UPPP_RUBXD</name>
<protein>
    <recommendedName>
        <fullName evidence="1">Undecaprenyl-diphosphatase</fullName>
        <ecNumber evidence="1">3.6.1.27</ecNumber>
    </recommendedName>
    <alternativeName>
        <fullName evidence="1">Bacitracin resistance protein</fullName>
    </alternativeName>
    <alternativeName>
        <fullName evidence="1">Undecaprenyl pyrophosphate phosphatase</fullName>
    </alternativeName>
</protein>
<proteinExistence type="inferred from homology"/>
<organism>
    <name type="scientific">Rubrobacter xylanophilus (strain DSM 9941 / JCM 11954 / NBRC 16129 / PRD-1)</name>
    <dbReference type="NCBI Taxonomy" id="266117"/>
    <lineage>
        <taxon>Bacteria</taxon>
        <taxon>Bacillati</taxon>
        <taxon>Actinomycetota</taxon>
        <taxon>Rubrobacteria</taxon>
        <taxon>Rubrobacterales</taxon>
        <taxon>Rubrobacteraceae</taxon>
        <taxon>Rubrobacter</taxon>
    </lineage>
</organism>
<comment type="function">
    <text evidence="1">Catalyzes the dephosphorylation of undecaprenyl diphosphate (UPP). Confers resistance to bacitracin.</text>
</comment>
<comment type="catalytic activity">
    <reaction evidence="1">
        <text>di-trans,octa-cis-undecaprenyl diphosphate + H2O = di-trans,octa-cis-undecaprenyl phosphate + phosphate + H(+)</text>
        <dbReference type="Rhea" id="RHEA:28094"/>
        <dbReference type="ChEBI" id="CHEBI:15377"/>
        <dbReference type="ChEBI" id="CHEBI:15378"/>
        <dbReference type="ChEBI" id="CHEBI:43474"/>
        <dbReference type="ChEBI" id="CHEBI:58405"/>
        <dbReference type="ChEBI" id="CHEBI:60392"/>
        <dbReference type="EC" id="3.6.1.27"/>
    </reaction>
</comment>
<comment type="subcellular location">
    <subcellularLocation>
        <location evidence="1">Cell membrane</location>
        <topology evidence="1">Multi-pass membrane protein</topology>
    </subcellularLocation>
</comment>
<comment type="miscellaneous">
    <text>Bacitracin is thought to be involved in the inhibition of peptidoglycan synthesis by sequestering undecaprenyl diphosphate, thereby reducing the pool of lipid carrier available.</text>
</comment>
<comment type="similarity">
    <text evidence="1">Belongs to the UppP family.</text>
</comment>
<feature type="chain" id="PRO_0000250261" description="Undecaprenyl-diphosphatase">
    <location>
        <begin position="1"/>
        <end position="272"/>
    </location>
</feature>
<feature type="transmembrane region" description="Helical" evidence="1">
    <location>
        <begin position="42"/>
        <end position="62"/>
    </location>
</feature>
<feature type="transmembrane region" description="Helical" evidence="1">
    <location>
        <begin position="92"/>
        <end position="112"/>
    </location>
</feature>
<feature type="transmembrane region" description="Helical" evidence="1">
    <location>
        <begin position="120"/>
        <end position="140"/>
    </location>
</feature>
<feature type="transmembrane region" description="Helical" evidence="1">
    <location>
        <begin position="149"/>
        <end position="169"/>
    </location>
</feature>
<feature type="transmembrane region" description="Helical" evidence="1">
    <location>
        <begin position="194"/>
        <end position="214"/>
    </location>
</feature>
<feature type="transmembrane region" description="Helical" evidence="1">
    <location>
        <begin position="224"/>
        <end position="244"/>
    </location>
</feature>
<feature type="transmembrane region" description="Helical" evidence="1">
    <location>
        <begin position="252"/>
        <end position="272"/>
    </location>
</feature>
<keyword id="KW-0046">Antibiotic resistance</keyword>
<keyword id="KW-1003">Cell membrane</keyword>
<keyword id="KW-0133">Cell shape</keyword>
<keyword id="KW-0961">Cell wall biogenesis/degradation</keyword>
<keyword id="KW-0378">Hydrolase</keyword>
<keyword id="KW-0472">Membrane</keyword>
<keyword id="KW-0573">Peptidoglycan synthesis</keyword>
<keyword id="KW-1185">Reference proteome</keyword>
<keyword id="KW-0812">Transmembrane</keyword>
<keyword id="KW-1133">Transmembrane helix</keyword>
<reference key="1">
    <citation type="submission" date="2006-06" db="EMBL/GenBank/DDBJ databases">
        <title>Complete sequence of Rubrobacter xylanophilus DSM 9941.</title>
        <authorList>
            <consortium name="US DOE Joint Genome Institute"/>
            <person name="Copeland A."/>
            <person name="Lucas S."/>
            <person name="Lapidus A."/>
            <person name="Barry K."/>
            <person name="Detter J.C."/>
            <person name="Glavina del Rio T."/>
            <person name="Hammon N."/>
            <person name="Israni S."/>
            <person name="Dalin E."/>
            <person name="Tice H."/>
            <person name="Pitluck S."/>
            <person name="Munk A.C."/>
            <person name="Brettin T."/>
            <person name="Bruce D."/>
            <person name="Han C."/>
            <person name="Tapia R."/>
            <person name="Gilna P."/>
            <person name="Schmutz J."/>
            <person name="Larimer F."/>
            <person name="Land M."/>
            <person name="Hauser L."/>
            <person name="Kyrpides N."/>
            <person name="Lykidis A."/>
            <person name="da Costa M.S."/>
            <person name="Rainey F.A."/>
            <person name="Empadinhas N."/>
            <person name="Jolivet E."/>
            <person name="Battista J.R."/>
            <person name="Richardson P."/>
        </authorList>
    </citation>
    <scope>NUCLEOTIDE SEQUENCE [LARGE SCALE GENOMIC DNA]</scope>
    <source>
        <strain>DSM 9941 / JCM 11954 / NBRC 16129 / PRD-1</strain>
    </source>
</reference>
<dbReference type="EC" id="3.6.1.27" evidence="1"/>
<dbReference type="EMBL" id="CP000386">
    <property type="protein sequence ID" value="ABG04208.1"/>
    <property type="molecule type" value="Genomic_DNA"/>
</dbReference>
<dbReference type="RefSeq" id="WP_011564226.1">
    <property type="nucleotide sequence ID" value="NC_008148.1"/>
</dbReference>
<dbReference type="SMR" id="Q1AWM0"/>
<dbReference type="STRING" id="266117.Rxyl_1243"/>
<dbReference type="KEGG" id="rxy:Rxyl_1243"/>
<dbReference type="eggNOG" id="COG1968">
    <property type="taxonomic scope" value="Bacteria"/>
</dbReference>
<dbReference type="HOGENOM" id="CLU_060296_1_0_11"/>
<dbReference type="PhylomeDB" id="Q1AWM0"/>
<dbReference type="Proteomes" id="UP000006637">
    <property type="component" value="Chromosome"/>
</dbReference>
<dbReference type="GO" id="GO:0005886">
    <property type="term" value="C:plasma membrane"/>
    <property type="evidence" value="ECO:0007669"/>
    <property type="project" value="UniProtKB-SubCell"/>
</dbReference>
<dbReference type="GO" id="GO:0050380">
    <property type="term" value="F:undecaprenyl-diphosphatase activity"/>
    <property type="evidence" value="ECO:0007669"/>
    <property type="project" value="UniProtKB-UniRule"/>
</dbReference>
<dbReference type="GO" id="GO:0071555">
    <property type="term" value="P:cell wall organization"/>
    <property type="evidence" value="ECO:0007669"/>
    <property type="project" value="UniProtKB-KW"/>
</dbReference>
<dbReference type="GO" id="GO:0009252">
    <property type="term" value="P:peptidoglycan biosynthetic process"/>
    <property type="evidence" value="ECO:0007669"/>
    <property type="project" value="UniProtKB-KW"/>
</dbReference>
<dbReference type="GO" id="GO:0008360">
    <property type="term" value="P:regulation of cell shape"/>
    <property type="evidence" value="ECO:0007669"/>
    <property type="project" value="UniProtKB-KW"/>
</dbReference>
<dbReference type="GO" id="GO:0046677">
    <property type="term" value="P:response to antibiotic"/>
    <property type="evidence" value="ECO:0007669"/>
    <property type="project" value="UniProtKB-UniRule"/>
</dbReference>
<dbReference type="HAMAP" id="MF_01006">
    <property type="entry name" value="Undec_diphosphatase"/>
    <property type="match status" value="1"/>
</dbReference>
<dbReference type="InterPro" id="IPR003824">
    <property type="entry name" value="UppP"/>
</dbReference>
<dbReference type="NCBIfam" id="TIGR00753">
    <property type="entry name" value="undec_PP_bacA"/>
    <property type="match status" value="1"/>
</dbReference>
<dbReference type="PANTHER" id="PTHR30622">
    <property type="entry name" value="UNDECAPRENYL-DIPHOSPHATASE"/>
    <property type="match status" value="1"/>
</dbReference>
<dbReference type="PANTHER" id="PTHR30622:SF4">
    <property type="entry name" value="UNDECAPRENYL-DIPHOSPHATASE"/>
    <property type="match status" value="1"/>
</dbReference>
<dbReference type="Pfam" id="PF02673">
    <property type="entry name" value="BacA"/>
    <property type="match status" value="1"/>
</dbReference>
<sequence>MLELLQAVLLGAVQGLTEFLPVSSSGHLLLGQYFLGLDQDRFGLSFDVALHLGTLVAVVVFFRRDLLRMAGAFVRSLTRGRDLSEPDQRLAYLVLAATVPAALIGYLWEDFFETAVRSPWVVVFNLAFVGLLFLVAEAVGRKSRRAEKMGFAEAVGIGLAQAAALVPGVSRSGATITLGLLFGLRREEAARFSFLMSAPIIAGAGTLQLGEVLAEGMGAEQALMFAVGFLCSAVVGYLAIRFFISFVARYSLRAFAYYRFALAALVAALLLL</sequence>